<comment type="function">
    <text evidence="1 2 6">Sodium-independent anion exchanger mediating bicarbonate, chloride, sulfate and oxalate transport (By similarity). Exhibits sodium-independent sulfate anion transporter activity that may cooperate with SLC26A2 to mediate DIDS-sensitive sulfate uptake into high endothelial venules endothelial cells (HEVEC) (PubMed:12626430). In the kidney, mediates chloride-bicarbonate exchange, facilitating V-ATPase-mediated acid secretion (By similarity). May function as a chloride channel, playing an important role in moderating chloride homeostasis and neuronal activity in the cerebellum (By similarity).</text>
</comment>
<comment type="catalytic activity">
    <reaction evidence="1">
        <text>hydrogencarbonate(in) + chloride(out) = hydrogencarbonate(out) + chloride(in)</text>
        <dbReference type="Rhea" id="RHEA:72363"/>
        <dbReference type="ChEBI" id="CHEBI:17544"/>
        <dbReference type="ChEBI" id="CHEBI:17996"/>
    </reaction>
</comment>
<comment type="catalytic activity">
    <reaction evidence="1">
        <text>sulfate(in) + H(+)(in) = sulfate(out) + H(+)(out)</text>
        <dbReference type="Rhea" id="RHEA:28574"/>
        <dbReference type="ChEBI" id="CHEBI:15378"/>
        <dbReference type="ChEBI" id="CHEBI:16189"/>
    </reaction>
</comment>
<comment type="catalytic activity">
    <reaction evidence="1">
        <text>oxalate(in) + chloride(out) = oxalate(out) + chloride(in)</text>
        <dbReference type="Rhea" id="RHEA:72263"/>
        <dbReference type="ChEBI" id="CHEBI:17996"/>
        <dbReference type="ChEBI" id="CHEBI:30623"/>
    </reaction>
</comment>
<comment type="interaction">
    <interactant intactId="EBI-19115335">
        <id>Q86WA9</id>
    </interactant>
    <interactant intactId="EBI-12188413">
        <id>B2RUZ4</id>
        <label>SMIM1</label>
    </interactant>
    <organismsDiffer>false</organismsDiffer>
    <experiments>3</experiments>
</comment>
<comment type="subcellular location">
    <subcellularLocation>
        <location evidence="6">Cell membrane</location>
        <topology evidence="3">Multi-pass membrane protein</topology>
    </subcellularLocation>
    <subcellularLocation>
        <location evidence="7">Lysosome membrane</location>
        <topology evidence="3">Multi-pass membrane protein</topology>
    </subcellularLocation>
    <subcellularLocation>
        <location evidence="2">Apical cell membrane</location>
        <topology evidence="3">Multi-pass membrane protein</topology>
    </subcellularLocation>
    <subcellularLocation>
        <location evidence="2">Basolateral cell membrane</location>
        <topology evidence="3">Multi-pass membrane protein</topology>
    </subcellularLocation>
</comment>
<comment type="tissue specificity">
    <text evidence="5 6">Detected in all tissues tested with highest expression observed in brain, kidney, HEVEC and placenta and lowest in pancreas, skeletal muscle, liver, lung and heart.</text>
</comment>
<comment type="similarity">
    <text evidence="3">Belongs to the SLC26A/SulP transporter (TC 2.A.53) family.</text>
</comment>
<protein>
    <recommendedName>
        <fullName>Sodium-independent sulfate anion transporter</fullName>
    </recommendedName>
    <alternativeName>
        <fullName>Solute carrier family 26 member 11</fullName>
    </alternativeName>
</protein>
<evidence type="ECO:0000250" key="1">
    <source>
        <dbReference type="UniProtKB" id="G3C7W6"/>
    </source>
</evidence>
<evidence type="ECO:0000250" key="2">
    <source>
        <dbReference type="UniProtKB" id="Q80ZD3"/>
    </source>
</evidence>
<evidence type="ECO:0000255" key="3"/>
<evidence type="ECO:0000255" key="4">
    <source>
        <dbReference type="PROSITE-ProRule" id="PRU00198"/>
    </source>
</evidence>
<evidence type="ECO:0000269" key="5">
    <source>
    </source>
</evidence>
<evidence type="ECO:0000269" key="6">
    <source>
    </source>
</evidence>
<evidence type="ECO:0000269" key="7">
    <source>
    </source>
</evidence>
<evidence type="ECO:0000269" key="8">
    <source>
    </source>
</evidence>
<evidence type="ECO:0000305" key="9"/>
<evidence type="ECO:0000312" key="10">
    <source>
        <dbReference type="EMBL" id="AAH35900.2"/>
    </source>
</evidence>
<evidence type="ECO:0000312" key="11">
    <source>
        <dbReference type="EMBL" id="AAH47451.1"/>
    </source>
</evidence>
<evidence type="ECO:0000312" key="12">
    <source>
        <dbReference type="EMBL" id="AAM92902.1"/>
    </source>
</evidence>
<evidence type="ECO:0000312" key="13">
    <source>
        <dbReference type="EMBL" id="AAO26673.1"/>
    </source>
</evidence>
<evidence type="ECO:0000312" key="14">
    <source>
        <dbReference type="EMBL" id="BAC11496.1"/>
    </source>
</evidence>
<evidence type="ECO:0000312" key="15">
    <source>
        <dbReference type="EMBL" id="CAD66450.1"/>
    </source>
</evidence>
<evidence type="ECO:0000312" key="16">
    <source>
        <dbReference type="HGNC" id="HGNC:14471"/>
    </source>
</evidence>
<name>S2611_HUMAN</name>
<reference evidence="9 15" key="1">
    <citation type="journal article" date="2003" name="FASEB J.">
        <title>Molecular and functional characterization of SLC26A11, a sodium-independent sulfate transporter from high endothelial venules.</title>
        <authorList>
            <person name="Vincourt J.-B."/>
            <person name="Jullien D."/>
            <person name="Amalric F."/>
            <person name="Girard J.-P."/>
        </authorList>
    </citation>
    <scope>NUCLEOTIDE SEQUENCE [MRNA]</scope>
    <scope>FUNCTION</scope>
    <scope>SUBCELLULAR LOCATION</scope>
    <scope>TISSUE SPECIFICITY</scope>
    <source>
        <tissue evidence="15">Endothelial cell</tissue>
    </source>
</reference>
<reference evidence="13" key="2">
    <citation type="submission" date="2001-02" db="EMBL/GenBank/DDBJ databases">
        <title>Characterization of Homo sapiens SLC26A11, a putative anion exchanger.</title>
        <authorList>
            <person name="Mount D.B."/>
        </authorList>
    </citation>
    <scope>NUCLEOTIDE SEQUENCE [MRNA]</scope>
</reference>
<reference key="3">
    <citation type="journal article" date="2004" name="Nat. Genet.">
        <title>Complete sequencing and characterization of 21,243 full-length human cDNAs.</title>
        <authorList>
            <person name="Ota T."/>
            <person name="Suzuki Y."/>
            <person name="Nishikawa T."/>
            <person name="Otsuki T."/>
            <person name="Sugiyama T."/>
            <person name="Irie R."/>
            <person name="Wakamatsu A."/>
            <person name="Hayashi K."/>
            <person name="Sato H."/>
            <person name="Nagai K."/>
            <person name="Kimura K."/>
            <person name="Makita H."/>
            <person name="Sekine M."/>
            <person name="Obayashi M."/>
            <person name="Nishi T."/>
            <person name="Shibahara T."/>
            <person name="Tanaka T."/>
            <person name="Ishii S."/>
            <person name="Yamamoto J."/>
            <person name="Saito K."/>
            <person name="Kawai Y."/>
            <person name="Isono Y."/>
            <person name="Nakamura Y."/>
            <person name="Nagahari K."/>
            <person name="Murakami K."/>
            <person name="Yasuda T."/>
            <person name="Iwayanagi T."/>
            <person name="Wagatsuma M."/>
            <person name="Shiratori A."/>
            <person name="Sudo H."/>
            <person name="Hosoiri T."/>
            <person name="Kaku Y."/>
            <person name="Kodaira H."/>
            <person name="Kondo H."/>
            <person name="Sugawara M."/>
            <person name="Takahashi M."/>
            <person name="Kanda K."/>
            <person name="Yokoi T."/>
            <person name="Furuya T."/>
            <person name="Kikkawa E."/>
            <person name="Omura Y."/>
            <person name="Abe K."/>
            <person name="Kamihara K."/>
            <person name="Katsuta N."/>
            <person name="Sato K."/>
            <person name="Tanikawa M."/>
            <person name="Yamazaki M."/>
            <person name="Ninomiya K."/>
            <person name="Ishibashi T."/>
            <person name="Yamashita H."/>
            <person name="Murakawa K."/>
            <person name="Fujimori K."/>
            <person name="Tanai H."/>
            <person name="Kimata M."/>
            <person name="Watanabe M."/>
            <person name="Hiraoka S."/>
            <person name="Chiba Y."/>
            <person name="Ishida S."/>
            <person name="Ono Y."/>
            <person name="Takiguchi S."/>
            <person name="Watanabe S."/>
            <person name="Yosida M."/>
            <person name="Hotuta T."/>
            <person name="Kusano J."/>
            <person name="Kanehori K."/>
            <person name="Takahashi-Fujii A."/>
            <person name="Hara H."/>
            <person name="Tanase T.-O."/>
            <person name="Nomura Y."/>
            <person name="Togiya S."/>
            <person name="Komai F."/>
            <person name="Hara R."/>
            <person name="Takeuchi K."/>
            <person name="Arita M."/>
            <person name="Imose N."/>
            <person name="Musashino K."/>
            <person name="Yuuki H."/>
            <person name="Oshima A."/>
            <person name="Sasaki N."/>
            <person name="Aotsuka S."/>
            <person name="Yoshikawa Y."/>
            <person name="Matsunawa H."/>
            <person name="Ichihara T."/>
            <person name="Shiohata N."/>
            <person name="Sano S."/>
            <person name="Moriya S."/>
            <person name="Momiyama H."/>
            <person name="Satoh N."/>
            <person name="Takami S."/>
            <person name="Terashima Y."/>
            <person name="Suzuki O."/>
            <person name="Nakagawa S."/>
            <person name="Senoh A."/>
            <person name="Mizoguchi H."/>
            <person name="Goto Y."/>
            <person name="Shimizu F."/>
            <person name="Wakebe H."/>
            <person name="Hishigaki H."/>
            <person name="Watanabe T."/>
            <person name="Sugiyama A."/>
            <person name="Takemoto M."/>
            <person name="Kawakami B."/>
            <person name="Yamazaki M."/>
            <person name="Watanabe K."/>
            <person name="Kumagai A."/>
            <person name="Itakura S."/>
            <person name="Fukuzumi Y."/>
            <person name="Fujimori Y."/>
            <person name="Komiyama M."/>
            <person name="Tashiro H."/>
            <person name="Tanigami A."/>
            <person name="Fujiwara T."/>
            <person name="Ono T."/>
            <person name="Yamada K."/>
            <person name="Fujii Y."/>
            <person name="Ozaki K."/>
            <person name="Hirao M."/>
            <person name="Ohmori Y."/>
            <person name="Kawabata A."/>
            <person name="Hikiji T."/>
            <person name="Kobatake N."/>
            <person name="Inagaki H."/>
            <person name="Ikema Y."/>
            <person name="Okamoto S."/>
            <person name="Okitani R."/>
            <person name="Kawakami T."/>
            <person name="Noguchi S."/>
            <person name="Itoh T."/>
            <person name="Shigeta K."/>
            <person name="Senba T."/>
            <person name="Matsumura K."/>
            <person name="Nakajima Y."/>
            <person name="Mizuno T."/>
            <person name="Morinaga M."/>
            <person name="Sasaki M."/>
            <person name="Togashi T."/>
            <person name="Oyama M."/>
            <person name="Hata H."/>
            <person name="Watanabe M."/>
            <person name="Komatsu T."/>
            <person name="Mizushima-Sugano J."/>
            <person name="Satoh T."/>
            <person name="Shirai Y."/>
            <person name="Takahashi Y."/>
            <person name="Nakagawa K."/>
            <person name="Okumura K."/>
            <person name="Nagase T."/>
            <person name="Nomura N."/>
            <person name="Kikuchi H."/>
            <person name="Masuho Y."/>
            <person name="Yamashita R."/>
            <person name="Nakai K."/>
            <person name="Yada T."/>
            <person name="Nakamura Y."/>
            <person name="Ohara O."/>
            <person name="Isogai T."/>
            <person name="Sugano S."/>
        </authorList>
    </citation>
    <scope>NUCLEOTIDE SEQUENCE [LARGE SCALE MRNA]</scope>
    <source>
        <tissue>Placenta</tissue>
    </source>
</reference>
<reference evidence="14" key="4">
    <citation type="journal article" date="2005" name="DNA Res.">
        <title>Signal sequence and keyword trap in silico for selection of full-length human cDNAs encoding secretion or membrane proteins from oligo-capped cDNA libraries.</title>
        <authorList>
            <person name="Otsuki T."/>
            <person name="Ota T."/>
            <person name="Nishikawa T."/>
            <person name="Hayashi K."/>
            <person name="Suzuki Y."/>
            <person name="Yamamoto J."/>
            <person name="Wakamatsu A."/>
            <person name="Kimura K."/>
            <person name="Sakamoto K."/>
            <person name="Hatano N."/>
            <person name="Kawai Y."/>
            <person name="Ishii S."/>
            <person name="Saito K."/>
            <person name="Kojima S."/>
            <person name="Sugiyama T."/>
            <person name="Ono T."/>
            <person name="Okano K."/>
            <person name="Yoshikawa Y."/>
            <person name="Aotsuka S."/>
            <person name="Sasaki N."/>
            <person name="Hattori A."/>
            <person name="Okumura K."/>
            <person name="Nagai K."/>
            <person name="Sugano S."/>
            <person name="Isogai T."/>
        </authorList>
    </citation>
    <scope>NUCLEOTIDE SEQUENCE [LARGE SCALE MRNA]</scope>
    <source>
        <tissue evidence="14">Thyroid</tissue>
    </source>
</reference>
<reference evidence="11" key="5">
    <citation type="journal article" date="2004" name="Genome Res.">
        <title>The status, quality, and expansion of the NIH full-length cDNA project: the Mammalian Gene Collection (MGC).</title>
        <authorList>
            <consortium name="The MGC Project Team"/>
        </authorList>
    </citation>
    <scope>NUCLEOTIDE SEQUENCE [LARGE SCALE MRNA]</scope>
    <source>
        <tissue evidence="10">Fetal brain</tissue>
        <tissue evidence="11">Hypothalamus</tissue>
    </source>
</reference>
<reference evidence="9 12" key="6">
    <citation type="journal article" date="2000" name="Genomics">
        <title>Mapping of five new putative anion transporter genes in human and characterization of SLC26A6, a candidate gene for pancreatic anion exchanger.</title>
        <authorList>
            <person name="Lohi H."/>
            <person name="Kujala M."/>
            <person name="Kerkelae E."/>
            <person name="Saarialho-Kere U."/>
            <person name="Kestilae M."/>
            <person name="Kere J."/>
        </authorList>
    </citation>
    <scope>NUCLEOTIDE SEQUENCE [MRNA] OF 307-599</scope>
    <scope>TISSUE SPECIFICITY</scope>
</reference>
<reference key="7">
    <citation type="journal article" date="2007" name="Traffic">
        <title>Integral and associated lysosomal membrane proteins.</title>
        <authorList>
            <person name="Schroeder B."/>
            <person name="Wrocklage C."/>
            <person name="Pan C."/>
            <person name="Jaeger R."/>
            <person name="Koesters B."/>
            <person name="Schaefer H."/>
            <person name="Elsaesser H.-P."/>
            <person name="Mann M."/>
            <person name="Hasilik A."/>
        </authorList>
    </citation>
    <scope>SUBCELLULAR LOCATION [LARGE SCALE ANALYSIS]</scope>
    <source>
        <tissue>Placenta</tissue>
    </source>
</reference>
<reference key="8">
    <citation type="journal article" date="2010" name="Proteomics">
        <title>The proteome of lysosomes.</title>
        <authorList>
            <person name="Schroeder B.A."/>
            <person name="Wrocklage C."/>
            <person name="Hasilik A."/>
            <person name="Saftig P."/>
        </authorList>
    </citation>
    <scope>REVIEW</scope>
    <scope>SUBCELLULAR LOCATION</scope>
</reference>
<reference key="9">
    <citation type="journal article" date="2012" name="Am. J. Hum. Genet.">
        <title>PSORS2 is due to mutations in CARD14.</title>
        <authorList>
            <person name="Jordan C.T."/>
            <person name="Cao L."/>
            <person name="Roberson E.D."/>
            <person name="Pierson K.C."/>
            <person name="Yang C.F."/>
            <person name="Joyce C.E."/>
            <person name="Ryan C."/>
            <person name="Duan S."/>
            <person name="Helms C.A."/>
            <person name="Liu Y."/>
            <person name="Chen Y."/>
            <person name="McBride A.A."/>
            <person name="Hwu W.L."/>
            <person name="Wu J.Y."/>
            <person name="Chen Y.T."/>
            <person name="Menter A."/>
            <person name="Goldbach-Mansky R."/>
            <person name="Lowes M.A."/>
            <person name="Bowcock A.M."/>
        </authorList>
    </citation>
    <scope>VARIANT CYS-122</scope>
</reference>
<gene>
    <name evidence="16" type="primary">SLC26A11</name>
</gene>
<dbReference type="EMBL" id="AJ544073">
    <property type="protein sequence ID" value="CAD66450.1"/>
    <property type="molecule type" value="mRNA"/>
</dbReference>
<dbReference type="EMBL" id="AF345195">
    <property type="protein sequence ID" value="AAO26673.1"/>
    <property type="molecule type" value="mRNA"/>
</dbReference>
<dbReference type="EMBL" id="AK315132">
    <property type="protein sequence ID" value="BAG37584.1"/>
    <property type="molecule type" value="mRNA"/>
</dbReference>
<dbReference type="EMBL" id="AK075248">
    <property type="protein sequence ID" value="BAC11496.1"/>
    <property type="molecule type" value="mRNA"/>
</dbReference>
<dbReference type="EMBL" id="BC035900">
    <property type="protein sequence ID" value="AAH35900.2"/>
    <property type="molecule type" value="mRNA"/>
</dbReference>
<dbReference type="EMBL" id="BC047451">
    <property type="protein sequence ID" value="AAH47451.1"/>
    <property type="molecule type" value="mRNA"/>
</dbReference>
<dbReference type="EMBL" id="AF331524">
    <property type="protein sequence ID" value="AAM92902.1"/>
    <property type="molecule type" value="mRNA"/>
</dbReference>
<dbReference type="CCDS" id="CCDS11771.2"/>
<dbReference type="RefSeq" id="NP_001159819.1">
    <property type="nucleotide sequence ID" value="NM_001166347.2"/>
</dbReference>
<dbReference type="RefSeq" id="NP_001159820.1">
    <property type="nucleotide sequence ID" value="NM_001166348.2"/>
</dbReference>
<dbReference type="RefSeq" id="NP_001159821.1">
    <property type="nucleotide sequence ID" value="NM_001166349.2"/>
</dbReference>
<dbReference type="RefSeq" id="NP_775897.3">
    <property type="nucleotide sequence ID" value="NM_173626.4"/>
</dbReference>
<dbReference type="RefSeq" id="XP_047291762.1">
    <property type="nucleotide sequence ID" value="XM_047435806.1"/>
</dbReference>
<dbReference type="RefSeq" id="XP_054171775.1">
    <property type="nucleotide sequence ID" value="XM_054315800.1"/>
</dbReference>
<dbReference type="SMR" id="Q86WA9"/>
<dbReference type="BioGRID" id="129771">
    <property type="interactions" value="13"/>
</dbReference>
<dbReference type="FunCoup" id="Q86WA9">
    <property type="interactions" value="423"/>
</dbReference>
<dbReference type="IntAct" id="Q86WA9">
    <property type="interactions" value="4"/>
</dbReference>
<dbReference type="MINT" id="Q86WA9"/>
<dbReference type="STRING" id="9606.ENSP00000355384"/>
<dbReference type="TCDB" id="2.A.53.1.10">
    <property type="family name" value="the sulfate permease (sulp) family"/>
</dbReference>
<dbReference type="GlyGen" id="Q86WA9">
    <property type="glycosylation" value="1 site"/>
</dbReference>
<dbReference type="iPTMnet" id="Q86WA9"/>
<dbReference type="PhosphoSitePlus" id="Q86WA9"/>
<dbReference type="SwissPalm" id="Q86WA9"/>
<dbReference type="BioMuta" id="SLC26A11"/>
<dbReference type="DMDM" id="182705284"/>
<dbReference type="jPOST" id="Q86WA9"/>
<dbReference type="MassIVE" id="Q86WA9"/>
<dbReference type="PaxDb" id="9606-ENSP00000355384"/>
<dbReference type="PeptideAtlas" id="Q86WA9"/>
<dbReference type="ProteomicsDB" id="70139"/>
<dbReference type="Antibodypedia" id="32732">
    <property type="antibodies" value="37 antibodies from 11 providers"/>
</dbReference>
<dbReference type="DNASU" id="284129"/>
<dbReference type="Ensembl" id="ENST00000361193.8">
    <property type="protein sequence ID" value="ENSP00000355384.3"/>
    <property type="gene ID" value="ENSG00000181045.16"/>
</dbReference>
<dbReference type="Ensembl" id="ENST00000411502.7">
    <property type="protein sequence ID" value="ENSP00000403998.3"/>
    <property type="gene ID" value="ENSG00000181045.16"/>
</dbReference>
<dbReference type="Ensembl" id="ENST00000546047.7">
    <property type="protein sequence ID" value="ENSP00000440724.2"/>
    <property type="gene ID" value="ENSG00000181045.16"/>
</dbReference>
<dbReference type="Ensembl" id="ENST00000572725.5">
    <property type="protein sequence ID" value="ENSP00000459470.1"/>
    <property type="gene ID" value="ENSG00000181045.16"/>
</dbReference>
<dbReference type="GeneID" id="284129"/>
<dbReference type="KEGG" id="hsa:284129"/>
<dbReference type="MANE-Select" id="ENST00000361193.8">
    <property type="protein sequence ID" value="ENSP00000355384.3"/>
    <property type="RefSeq nucleotide sequence ID" value="NM_001166347.2"/>
    <property type="RefSeq protein sequence ID" value="NP_001159819.1"/>
</dbReference>
<dbReference type="UCSC" id="uc002jyb.3">
    <property type="organism name" value="human"/>
</dbReference>
<dbReference type="AGR" id="HGNC:14471"/>
<dbReference type="CTD" id="284129"/>
<dbReference type="DisGeNET" id="284129"/>
<dbReference type="GeneCards" id="SLC26A11"/>
<dbReference type="HGNC" id="HGNC:14471">
    <property type="gene designation" value="SLC26A11"/>
</dbReference>
<dbReference type="HPA" id="ENSG00000181045">
    <property type="expression patterns" value="Low tissue specificity"/>
</dbReference>
<dbReference type="MalaCards" id="SLC26A11"/>
<dbReference type="MIM" id="610117">
    <property type="type" value="gene"/>
</dbReference>
<dbReference type="neXtProt" id="NX_Q86WA9"/>
<dbReference type="OpenTargets" id="ENSG00000181045"/>
<dbReference type="PharmGKB" id="PA37888"/>
<dbReference type="VEuPathDB" id="HostDB:ENSG00000181045"/>
<dbReference type="eggNOG" id="KOG0236">
    <property type="taxonomic scope" value="Eukaryota"/>
</dbReference>
<dbReference type="GeneTree" id="ENSGT01120000271864"/>
<dbReference type="HOGENOM" id="CLU_003182_12_2_1"/>
<dbReference type="InParanoid" id="Q86WA9"/>
<dbReference type="OMA" id="IPETAGF"/>
<dbReference type="OrthoDB" id="288203at2759"/>
<dbReference type="PAN-GO" id="Q86WA9">
    <property type="GO annotations" value="3 GO annotations based on evolutionary models"/>
</dbReference>
<dbReference type="PhylomeDB" id="Q86WA9"/>
<dbReference type="TreeFam" id="TF323537"/>
<dbReference type="PathwayCommons" id="Q86WA9"/>
<dbReference type="Reactome" id="R-HSA-427601">
    <property type="pathway name" value="Multifunctional anion exchangers"/>
</dbReference>
<dbReference type="SignaLink" id="Q86WA9"/>
<dbReference type="BioGRID-ORCS" id="284129">
    <property type="hits" value="11 hits in 1134 CRISPR screens"/>
</dbReference>
<dbReference type="ChiTaRS" id="SLC26A11">
    <property type="organism name" value="human"/>
</dbReference>
<dbReference type="GenomeRNAi" id="284129"/>
<dbReference type="Pharos" id="Q86WA9">
    <property type="development level" value="Tdark"/>
</dbReference>
<dbReference type="PRO" id="PR:Q86WA9"/>
<dbReference type="Proteomes" id="UP000005640">
    <property type="component" value="Chromosome 17"/>
</dbReference>
<dbReference type="RNAct" id="Q86WA9">
    <property type="molecule type" value="protein"/>
</dbReference>
<dbReference type="Bgee" id="ENSG00000181045">
    <property type="expression patterns" value="Expressed in pancreatic ductal cell and 173 other cell types or tissues"/>
</dbReference>
<dbReference type="ExpressionAtlas" id="Q86WA9">
    <property type="expression patterns" value="baseline and differential"/>
</dbReference>
<dbReference type="GO" id="GO:0016324">
    <property type="term" value="C:apical plasma membrane"/>
    <property type="evidence" value="ECO:0000250"/>
    <property type="project" value="UniProtKB"/>
</dbReference>
<dbReference type="GO" id="GO:0016323">
    <property type="term" value="C:basolateral plasma membrane"/>
    <property type="evidence" value="ECO:0000250"/>
    <property type="project" value="UniProtKB"/>
</dbReference>
<dbReference type="GO" id="GO:0005783">
    <property type="term" value="C:endoplasmic reticulum"/>
    <property type="evidence" value="ECO:0000314"/>
    <property type="project" value="UniProtKB"/>
</dbReference>
<dbReference type="GO" id="GO:0070062">
    <property type="term" value="C:extracellular exosome"/>
    <property type="evidence" value="ECO:0007005"/>
    <property type="project" value="UniProtKB"/>
</dbReference>
<dbReference type="GO" id="GO:0005794">
    <property type="term" value="C:Golgi apparatus"/>
    <property type="evidence" value="ECO:0000314"/>
    <property type="project" value="UniProtKB"/>
</dbReference>
<dbReference type="GO" id="GO:0043231">
    <property type="term" value="C:intracellular membrane-bounded organelle"/>
    <property type="evidence" value="ECO:0000314"/>
    <property type="project" value="HPA"/>
</dbReference>
<dbReference type="GO" id="GO:0005765">
    <property type="term" value="C:lysosomal membrane"/>
    <property type="evidence" value="ECO:0000314"/>
    <property type="project" value="UniProtKB"/>
</dbReference>
<dbReference type="GO" id="GO:0016020">
    <property type="term" value="C:membrane"/>
    <property type="evidence" value="ECO:0000314"/>
    <property type="project" value="UniProtKB"/>
</dbReference>
<dbReference type="GO" id="GO:0005654">
    <property type="term" value="C:nucleoplasm"/>
    <property type="evidence" value="ECO:0000314"/>
    <property type="project" value="HPA"/>
</dbReference>
<dbReference type="GO" id="GO:0005886">
    <property type="term" value="C:plasma membrane"/>
    <property type="evidence" value="ECO:0000314"/>
    <property type="project" value="UniProtKB"/>
</dbReference>
<dbReference type="GO" id="GO:0005254">
    <property type="term" value="F:chloride channel activity"/>
    <property type="evidence" value="ECO:0000250"/>
    <property type="project" value="UniProtKB"/>
</dbReference>
<dbReference type="GO" id="GO:0140900">
    <property type="term" value="F:chloride:bicarbonate antiporter activity"/>
    <property type="evidence" value="ECO:0000250"/>
    <property type="project" value="UniProtKB"/>
</dbReference>
<dbReference type="GO" id="GO:0008509">
    <property type="term" value="F:monoatomic anion transmembrane transporter activity"/>
    <property type="evidence" value="ECO:0000314"/>
    <property type="project" value="UniProtKB"/>
</dbReference>
<dbReference type="GO" id="GO:0008271">
    <property type="term" value="F:secondary active sulfate transmembrane transporter activity"/>
    <property type="evidence" value="ECO:0007669"/>
    <property type="project" value="InterPro"/>
</dbReference>
<dbReference type="GO" id="GO:0015116">
    <property type="term" value="F:sulfate transmembrane transporter activity"/>
    <property type="evidence" value="ECO:0000318"/>
    <property type="project" value="GO_Central"/>
</dbReference>
<dbReference type="GO" id="GO:1902476">
    <property type="term" value="P:chloride transmembrane transport"/>
    <property type="evidence" value="ECO:0000318"/>
    <property type="project" value="GO_Central"/>
</dbReference>
<dbReference type="GO" id="GO:0006811">
    <property type="term" value="P:monoatomic ion transport"/>
    <property type="evidence" value="ECO:0000304"/>
    <property type="project" value="Reactome"/>
</dbReference>
<dbReference type="GO" id="GO:0019532">
    <property type="term" value="P:oxalate transport"/>
    <property type="evidence" value="ECO:0000250"/>
    <property type="project" value="UniProtKB"/>
</dbReference>
<dbReference type="GO" id="GO:1902358">
    <property type="term" value="P:sulfate transmembrane transport"/>
    <property type="evidence" value="ECO:0000314"/>
    <property type="project" value="UniProtKB"/>
</dbReference>
<dbReference type="CDD" id="cd07042">
    <property type="entry name" value="STAS_SulP_like_sulfate_transporter"/>
    <property type="match status" value="1"/>
</dbReference>
<dbReference type="FunFam" id="3.30.750.24:FF:000013">
    <property type="entry name" value="Solute carrier family 26 member 11"/>
    <property type="match status" value="1"/>
</dbReference>
<dbReference type="Gene3D" id="3.30.750.24">
    <property type="entry name" value="STAS domain"/>
    <property type="match status" value="1"/>
</dbReference>
<dbReference type="InterPro" id="IPR018045">
    <property type="entry name" value="S04_transporter_CS"/>
</dbReference>
<dbReference type="InterPro" id="IPR011547">
    <property type="entry name" value="SLC26A/SulP_dom"/>
</dbReference>
<dbReference type="InterPro" id="IPR001902">
    <property type="entry name" value="SLC26A/SulP_fam"/>
</dbReference>
<dbReference type="InterPro" id="IPR002645">
    <property type="entry name" value="STAS_dom"/>
</dbReference>
<dbReference type="InterPro" id="IPR036513">
    <property type="entry name" value="STAS_dom_sf"/>
</dbReference>
<dbReference type="PANTHER" id="PTHR11814">
    <property type="entry name" value="SULFATE TRANSPORTER"/>
    <property type="match status" value="1"/>
</dbReference>
<dbReference type="Pfam" id="PF01740">
    <property type="entry name" value="STAS"/>
    <property type="match status" value="1"/>
</dbReference>
<dbReference type="Pfam" id="PF00916">
    <property type="entry name" value="Sulfate_transp"/>
    <property type="match status" value="1"/>
</dbReference>
<dbReference type="SUPFAM" id="SSF52091">
    <property type="entry name" value="SpoIIaa-like"/>
    <property type="match status" value="1"/>
</dbReference>
<dbReference type="PROSITE" id="PS01130">
    <property type="entry name" value="SLC26A"/>
    <property type="match status" value="1"/>
</dbReference>
<dbReference type="PROSITE" id="PS50801">
    <property type="entry name" value="STAS"/>
    <property type="match status" value="1"/>
</dbReference>
<keyword id="KW-0039">Anion exchange</keyword>
<keyword id="KW-1003">Cell membrane</keyword>
<keyword id="KW-0406">Ion transport</keyword>
<keyword id="KW-0458">Lysosome</keyword>
<keyword id="KW-0472">Membrane</keyword>
<keyword id="KW-1267">Proteomics identification</keyword>
<keyword id="KW-1185">Reference proteome</keyword>
<keyword id="KW-0812">Transmembrane</keyword>
<keyword id="KW-1133">Transmembrane helix</keyword>
<keyword id="KW-0813">Transport</keyword>
<sequence length="606" mass="65299">MPSSVTALGQARSSGPGMAPSACCCSPAALQRRLPILAWLPSYSLQWLKMDFVAGLSVGLTAIPQALAYAEVAGLPPQYGLYSAFMGCFVYFFLGTSRDVTLGPTAIMSLLVSFYTFHEPAYAVLLAFLSGCIQLAMGVLRLGFLLDFISYPVIKGFTSAAAVTIGFGQIKNLLGLQNIPRPFFLQVYHTFLRIAETRVGDAVLGLVCMLLLLVLKLMRDHVPPVHPEMPPGVRLSRGLVWAATTARNALVVSFAALVAYSFEVTGYQPFILTGETAEGLPPVRIPPFSVTTANGTISFTEMVQDMGAGLAVVPLMGLLESIAVAKAFASQNNYRIDANQELLAIGLTNMLGSLVSSYPVTGSFGRTAVNAQSGVCTPAGGLVTGVLVLLSLDYLTSLFYYIPKSALAAVIIMAVAPLFDTKIFRTLWRVKRLDLLPLCVTFLLCFWEVQYGILAGALVSLLMLLHSAARPETKVSEGPVLVLQPASGLSFPAMEALREEILSRALEVSPPRCLVLECTHVCSIDYTVVLGLGELLQDFQKQGVALAFVGLQVPVLRVLLSADLKGFQYFSTLEEAEKHLRQEPGTQPYNIREDSILDQKVALLKA</sequence>
<organism>
    <name type="scientific">Homo sapiens</name>
    <name type="common">Human</name>
    <dbReference type="NCBI Taxonomy" id="9606"/>
    <lineage>
        <taxon>Eukaryota</taxon>
        <taxon>Metazoa</taxon>
        <taxon>Chordata</taxon>
        <taxon>Craniata</taxon>
        <taxon>Vertebrata</taxon>
        <taxon>Euteleostomi</taxon>
        <taxon>Mammalia</taxon>
        <taxon>Eutheria</taxon>
        <taxon>Euarchontoglires</taxon>
        <taxon>Primates</taxon>
        <taxon>Haplorrhini</taxon>
        <taxon>Catarrhini</taxon>
        <taxon>Hominidae</taxon>
        <taxon>Homo</taxon>
    </lineage>
</organism>
<proteinExistence type="evidence at protein level"/>
<accession>Q86WA9</accession>
<accession>B2RCI7</accession>
<accession>Q86VX1</accession>
<accession>Q86YX7</accession>
<accession>Q8IV11</accession>
<accession>Q8N2I1</accession>
<accession>Q8NG03</accession>
<feature type="chain" id="PRO_0000320686" description="Sodium-independent sulfate anion transporter">
    <location>
        <begin position="1"/>
        <end position="606"/>
    </location>
</feature>
<feature type="topological domain" description="Extracellular" evidence="3">
    <location>
        <begin position="1"/>
        <end position="51"/>
    </location>
</feature>
<feature type="transmembrane region" description="Helical" evidence="3">
    <location>
        <begin position="52"/>
        <end position="72"/>
    </location>
</feature>
<feature type="topological domain" description="Cytoplasmic" evidence="3">
    <location>
        <position position="73"/>
    </location>
</feature>
<feature type="transmembrane region" description="Helical" evidence="3">
    <location>
        <begin position="74"/>
        <end position="94"/>
    </location>
</feature>
<feature type="topological domain" description="Extracellular" evidence="3">
    <location>
        <begin position="95"/>
        <end position="100"/>
    </location>
</feature>
<feature type="transmembrane region" description="Helical" evidence="3">
    <location>
        <begin position="101"/>
        <end position="117"/>
    </location>
</feature>
<feature type="topological domain" description="Cytoplasmic" evidence="3">
    <location>
        <begin position="118"/>
        <end position="119"/>
    </location>
</feature>
<feature type="transmembrane region" description="Helical" evidence="3">
    <location>
        <begin position="120"/>
        <end position="140"/>
    </location>
</feature>
<feature type="topological domain" description="Extracellular" evidence="3">
    <location>
        <begin position="141"/>
        <end position="147"/>
    </location>
</feature>
<feature type="transmembrane region" description="Helical" evidence="3">
    <location>
        <begin position="148"/>
        <end position="168"/>
    </location>
</feature>
<feature type="topological domain" description="Cytoplasmic" evidence="3">
    <location>
        <begin position="169"/>
        <end position="197"/>
    </location>
</feature>
<feature type="transmembrane region" description="Helical" evidence="3">
    <location>
        <begin position="198"/>
        <end position="218"/>
    </location>
</feature>
<feature type="topological domain" description="Extracellular" evidence="3">
    <location>
        <begin position="219"/>
        <end position="250"/>
    </location>
</feature>
<feature type="transmembrane region" description="Helical" evidence="3">
    <location>
        <begin position="251"/>
        <end position="271"/>
    </location>
</feature>
<feature type="topological domain" description="Cytoplasmic" evidence="3">
    <location>
        <begin position="272"/>
        <end position="307"/>
    </location>
</feature>
<feature type="transmembrane region" description="Helical" evidence="3">
    <location>
        <begin position="308"/>
        <end position="328"/>
    </location>
</feature>
<feature type="topological domain" description="Extracellular" evidence="3">
    <location>
        <begin position="329"/>
        <end position="341"/>
    </location>
</feature>
<feature type="transmembrane region" description="Helical" evidence="3">
    <location>
        <begin position="342"/>
        <end position="362"/>
    </location>
</feature>
<feature type="topological domain" description="Cytoplasmic" evidence="3">
    <location>
        <begin position="363"/>
        <end position="374"/>
    </location>
</feature>
<feature type="transmembrane region" description="Helical" evidence="3">
    <location>
        <begin position="375"/>
        <end position="395"/>
    </location>
</feature>
<feature type="topological domain" description="Extracellular" evidence="3">
    <location>
        <begin position="396"/>
        <end position="398"/>
    </location>
</feature>
<feature type="transmembrane region" description="Helical" evidence="3">
    <location>
        <begin position="399"/>
        <end position="419"/>
    </location>
</feature>
<feature type="topological domain" description="Cytoplasmic" evidence="3">
    <location>
        <begin position="420"/>
        <end position="441"/>
    </location>
</feature>
<feature type="transmembrane region" description="Helical" evidence="3">
    <location>
        <begin position="442"/>
        <end position="462"/>
    </location>
</feature>
<feature type="topological domain" description="Extracellular" evidence="3">
    <location>
        <begin position="463"/>
        <end position="606"/>
    </location>
</feature>
<feature type="domain" description="STAS" evidence="4">
    <location>
        <begin position="470"/>
        <end position="584"/>
    </location>
</feature>
<feature type="sequence variant" id="VAR_068239" description="In dbSNP:rs765188926." evidence="8">
    <original>Y</original>
    <variation>C</variation>
    <location>
        <position position="122"/>
    </location>
</feature>
<feature type="sequence conflict" description="In Ref. 1; CAD66450." evidence="9" ref="1">
    <original>S</original>
    <variation>Y</variation>
    <location>
        <position position="14"/>
    </location>
</feature>
<feature type="sequence conflict" description="In Ref. 1; CAD66450." evidence="9" ref="1">
    <original>L</original>
    <variation>M</variation>
    <location>
        <position position="319"/>
    </location>
</feature>
<feature type="sequence conflict" description="In Ref. 6; AAM92902." evidence="9" ref="6">
    <original>V</original>
    <variation>M</variation>
    <location>
        <position position="324"/>
    </location>
</feature>
<feature type="sequence conflict" description="In Ref. 2; AAO26673." evidence="9" ref="2">
    <original>F</original>
    <variation>S</variation>
    <location>
        <position position="328"/>
    </location>
</feature>
<feature type="sequence conflict" description="In Ref. 1; CAD66450." evidence="9" ref="1">
    <original>N</original>
    <variation>D</variation>
    <location>
        <position position="332"/>
    </location>
</feature>
<feature type="sequence conflict" description="In Ref. 2; AAO26673." evidence="9" ref="2">
    <original>V</original>
    <variation>A</variation>
    <location>
        <position position="415"/>
    </location>
</feature>
<feature type="sequence conflict" description="In Ref. 2; AAO26673." evidence="9" ref="2">
    <original>Y</original>
    <variation>H</variation>
    <location>
        <position position="569"/>
    </location>
</feature>
<feature type="sequence conflict" description="In Ref. 4; BAC11496." evidence="9" ref="4">
    <original>H</original>
    <variation>R</variation>
    <location>
        <position position="579"/>
    </location>
</feature>
<feature type="sequence conflict" description="In Ref. 5; AAH35900." evidence="9" ref="5">
    <original>E</original>
    <variation>K</variation>
    <location>
        <position position="583"/>
    </location>
</feature>